<proteinExistence type="inferred from homology"/>
<feature type="chain" id="PRO_0000197452" description="Glutathione synthetase">
    <location>
        <begin position="1"/>
        <end position="324"/>
    </location>
</feature>
<feature type="domain" description="ATP-grasp" evidence="2">
    <location>
        <begin position="133"/>
        <end position="317"/>
    </location>
</feature>
<feature type="binding site" evidence="2">
    <location>
        <begin position="159"/>
        <end position="215"/>
    </location>
    <ligand>
        <name>ATP</name>
        <dbReference type="ChEBI" id="CHEBI:30616"/>
    </ligand>
</feature>
<feature type="binding site" evidence="2">
    <location>
        <position position="288"/>
    </location>
    <ligand>
        <name>Mg(2+)</name>
        <dbReference type="ChEBI" id="CHEBI:18420"/>
    </ligand>
</feature>
<feature type="binding site" evidence="2">
    <location>
        <position position="290"/>
    </location>
    <ligand>
        <name>Mg(2+)</name>
        <dbReference type="ChEBI" id="CHEBI:18420"/>
    </ligand>
</feature>
<feature type="sequence conflict" description="In Ref. 1; AAA85527." evidence="3" ref="1">
    <original>W</original>
    <variation>C</variation>
    <location>
        <position position="50"/>
    </location>
</feature>
<feature type="sequence conflict" description="In Ref. 3; CAA83242." evidence="3" ref="3">
    <original>M</original>
    <variation>V</variation>
    <location>
        <position position="243"/>
    </location>
</feature>
<sequence>MKLAFIIDPIHQLDPCHDTSVALMEAAQILGHEVWVTQANWLSVVDSKAWAILQQVELVPVQLIDGRWVAASPWYTLNTRSFSSLETMDAVFMRTDPPVNDAYLYATYVLDYVDQRKTLVINNPNGIRGANEKMYALQFTKAIPETIVSADKDFIRQFVEAKGATVLKPLGNKAGEGILFLQAGDRNFNSIVELSTQQGRLPVMVQTYLPEAKEGDKRIILLNGEPIGALNRLASGSDFRNNMATGGTVAKTEITPREEEICSQIAANLRQDGLIFVGIDVIGGYLTEVNVTSPTGIREIDRLDGTRLAHQVIQWVEKNLQIQN</sequence>
<evidence type="ECO:0000250" key="1"/>
<evidence type="ECO:0000255" key="2">
    <source>
        <dbReference type="HAMAP-Rule" id="MF_00162"/>
    </source>
</evidence>
<evidence type="ECO:0000305" key="3"/>
<keyword id="KW-0067">ATP-binding</keyword>
<keyword id="KW-0317">Glutathione biosynthesis</keyword>
<keyword id="KW-0436">Ligase</keyword>
<keyword id="KW-0460">Magnesium</keyword>
<keyword id="KW-0464">Manganese</keyword>
<keyword id="KW-0479">Metal-binding</keyword>
<keyword id="KW-0547">Nucleotide-binding</keyword>
<keyword id="KW-1185">Reference proteome</keyword>
<name>GSHB_NOSS1</name>
<comment type="catalytic activity">
    <reaction evidence="2">
        <text>gamma-L-glutamyl-L-cysteine + glycine + ATP = glutathione + ADP + phosphate + H(+)</text>
        <dbReference type="Rhea" id="RHEA:13557"/>
        <dbReference type="ChEBI" id="CHEBI:15378"/>
        <dbReference type="ChEBI" id="CHEBI:30616"/>
        <dbReference type="ChEBI" id="CHEBI:43474"/>
        <dbReference type="ChEBI" id="CHEBI:57305"/>
        <dbReference type="ChEBI" id="CHEBI:57925"/>
        <dbReference type="ChEBI" id="CHEBI:58173"/>
        <dbReference type="ChEBI" id="CHEBI:456216"/>
        <dbReference type="EC" id="6.3.2.3"/>
    </reaction>
</comment>
<comment type="cofactor">
    <cofactor evidence="1">
        <name>Mg(2+)</name>
        <dbReference type="ChEBI" id="CHEBI:18420"/>
    </cofactor>
    <cofactor evidence="1">
        <name>Mn(2+)</name>
        <dbReference type="ChEBI" id="CHEBI:29035"/>
    </cofactor>
    <text evidence="1">Binds 1 Mg(2+) or Mn(2+) ion per subunit.</text>
</comment>
<comment type="pathway">
    <text evidence="2">Sulfur metabolism; glutathione biosynthesis; glutathione from L-cysteine and L-glutamate: step 2/2.</text>
</comment>
<comment type="similarity">
    <text evidence="2">Belongs to the prokaryotic GSH synthase family.</text>
</comment>
<reference key="1">
    <citation type="journal article" date="1995" name="Gene">
        <title>Cloning and sequence of ftsZ and flanking regions from the cyanobacterium Anabaena PCC 7120.</title>
        <authorList>
            <person name="Doherty H.M."/>
            <person name="Adams D.G."/>
        </authorList>
    </citation>
    <scope>NUCLEOTIDE SEQUENCE [GENOMIC DNA]</scope>
</reference>
<reference key="2">
    <citation type="journal article" date="2001" name="DNA Res.">
        <title>Complete genomic sequence of the filamentous nitrogen-fixing cyanobacterium Anabaena sp. strain PCC 7120.</title>
        <authorList>
            <person name="Kaneko T."/>
            <person name="Nakamura Y."/>
            <person name="Wolk C.P."/>
            <person name="Kuritz T."/>
            <person name="Sasamoto S."/>
            <person name="Watanabe A."/>
            <person name="Iriguchi M."/>
            <person name="Ishikawa A."/>
            <person name="Kawashima K."/>
            <person name="Kimura T."/>
            <person name="Kishida Y."/>
            <person name="Kohara M."/>
            <person name="Matsumoto M."/>
            <person name="Matsuno A."/>
            <person name="Muraki A."/>
            <person name="Nakazaki N."/>
            <person name="Shimpo S."/>
            <person name="Sugimoto M."/>
            <person name="Takazawa M."/>
            <person name="Yamada M."/>
            <person name="Yasuda M."/>
            <person name="Tabata S."/>
        </authorList>
    </citation>
    <scope>NUCLEOTIDE SEQUENCE [LARGE SCALE GENOMIC DNA]</scope>
    <source>
        <strain>PCC 7120 / SAG 25.82 / UTEX 2576</strain>
    </source>
</reference>
<reference key="3">
    <citation type="journal article" date="1995" name="Res. Microbiol.">
        <title>Analysis of genes encoding the cell division protein FtsZ and a glutathione synthetase homologue in the cyanobacterium Anabaena sp. PCC 7120.</title>
        <authorList>
            <person name="Zhang C.C."/>
            <person name="Huguenin S."/>
            <person name="Friry A."/>
        </authorList>
    </citation>
    <scope>NUCLEOTIDE SEQUENCE [GENOMIC DNA] OF 24-324</scope>
</reference>
<organism>
    <name type="scientific">Nostoc sp. (strain PCC 7120 / SAG 25.82 / UTEX 2576)</name>
    <dbReference type="NCBI Taxonomy" id="103690"/>
    <lineage>
        <taxon>Bacteria</taxon>
        <taxon>Bacillati</taxon>
        <taxon>Cyanobacteriota</taxon>
        <taxon>Cyanophyceae</taxon>
        <taxon>Nostocales</taxon>
        <taxon>Nostocaceae</taxon>
        <taxon>Nostoc</taxon>
    </lineage>
</organism>
<dbReference type="EC" id="6.3.2.3" evidence="2"/>
<dbReference type="EMBL" id="U14408">
    <property type="protein sequence ID" value="AAA85527.1"/>
    <property type="molecule type" value="Genomic_DNA"/>
</dbReference>
<dbReference type="EMBL" id="BA000019">
    <property type="protein sequence ID" value="BAB75558.1"/>
    <property type="molecule type" value="Genomic_DNA"/>
</dbReference>
<dbReference type="EMBL" id="Z31371">
    <property type="protein sequence ID" value="CAA83242.1"/>
    <property type="molecule type" value="Genomic_DNA"/>
</dbReference>
<dbReference type="PIR" id="AD2288">
    <property type="entry name" value="AD2288"/>
</dbReference>
<dbReference type="PIR" id="JC4291">
    <property type="entry name" value="JC4291"/>
</dbReference>
<dbReference type="RefSeq" id="WP_010998000.1">
    <property type="nucleotide sequence ID" value="NZ_RSCN01000011.1"/>
</dbReference>
<dbReference type="SMR" id="P45480"/>
<dbReference type="STRING" id="103690.gene:10495901"/>
<dbReference type="KEGG" id="ana:all3859"/>
<dbReference type="eggNOG" id="COG0189">
    <property type="taxonomic scope" value="Bacteria"/>
</dbReference>
<dbReference type="OrthoDB" id="9785415at2"/>
<dbReference type="UniPathway" id="UPA00142">
    <property type="reaction ID" value="UER00210"/>
</dbReference>
<dbReference type="Proteomes" id="UP000002483">
    <property type="component" value="Chromosome"/>
</dbReference>
<dbReference type="GO" id="GO:0005737">
    <property type="term" value="C:cytoplasm"/>
    <property type="evidence" value="ECO:0007669"/>
    <property type="project" value="TreeGrafter"/>
</dbReference>
<dbReference type="GO" id="GO:0005524">
    <property type="term" value="F:ATP binding"/>
    <property type="evidence" value="ECO:0007669"/>
    <property type="project" value="UniProtKB-UniRule"/>
</dbReference>
<dbReference type="GO" id="GO:0004363">
    <property type="term" value="F:glutathione synthase activity"/>
    <property type="evidence" value="ECO:0007669"/>
    <property type="project" value="UniProtKB-UniRule"/>
</dbReference>
<dbReference type="GO" id="GO:0046872">
    <property type="term" value="F:metal ion binding"/>
    <property type="evidence" value="ECO:0007669"/>
    <property type="project" value="UniProtKB-KW"/>
</dbReference>
<dbReference type="Gene3D" id="3.40.50.20">
    <property type="match status" value="1"/>
</dbReference>
<dbReference type="Gene3D" id="3.30.1490.20">
    <property type="entry name" value="ATP-grasp fold, A domain"/>
    <property type="match status" value="1"/>
</dbReference>
<dbReference type="Gene3D" id="3.30.470.20">
    <property type="entry name" value="ATP-grasp fold, B domain"/>
    <property type="match status" value="1"/>
</dbReference>
<dbReference type="HAMAP" id="MF_00162">
    <property type="entry name" value="GSH_S"/>
    <property type="match status" value="1"/>
</dbReference>
<dbReference type="InterPro" id="IPR011761">
    <property type="entry name" value="ATP-grasp"/>
</dbReference>
<dbReference type="InterPro" id="IPR013815">
    <property type="entry name" value="ATP_grasp_subdomain_1"/>
</dbReference>
<dbReference type="InterPro" id="IPR006284">
    <property type="entry name" value="Glut_synth_pro"/>
</dbReference>
<dbReference type="InterPro" id="IPR004218">
    <property type="entry name" value="GSHS_ATP-bd"/>
</dbReference>
<dbReference type="InterPro" id="IPR004215">
    <property type="entry name" value="GSHS_N"/>
</dbReference>
<dbReference type="InterPro" id="IPR016185">
    <property type="entry name" value="PreATP-grasp_dom_sf"/>
</dbReference>
<dbReference type="NCBIfam" id="TIGR01380">
    <property type="entry name" value="glut_syn"/>
    <property type="match status" value="1"/>
</dbReference>
<dbReference type="NCBIfam" id="NF003573">
    <property type="entry name" value="PRK05246.1"/>
    <property type="match status" value="1"/>
</dbReference>
<dbReference type="PANTHER" id="PTHR21621:SF4">
    <property type="entry name" value="GLUTATHIONE SYNTHETASE"/>
    <property type="match status" value="1"/>
</dbReference>
<dbReference type="PANTHER" id="PTHR21621">
    <property type="entry name" value="RIBOSOMAL PROTEIN S6 MODIFICATION PROTEIN"/>
    <property type="match status" value="1"/>
</dbReference>
<dbReference type="Pfam" id="PF02955">
    <property type="entry name" value="GSH-S_ATP"/>
    <property type="match status" value="1"/>
</dbReference>
<dbReference type="Pfam" id="PF02951">
    <property type="entry name" value="GSH-S_N"/>
    <property type="match status" value="1"/>
</dbReference>
<dbReference type="SUPFAM" id="SSF56059">
    <property type="entry name" value="Glutathione synthetase ATP-binding domain-like"/>
    <property type="match status" value="1"/>
</dbReference>
<dbReference type="SUPFAM" id="SSF52440">
    <property type="entry name" value="PreATP-grasp domain"/>
    <property type="match status" value="1"/>
</dbReference>
<dbReference type="PROSITE" id="PS50975">
    <property type="entry name" value="ATP_GRASP"/>
    <property type="match status" value="1"/>
</dbReference>
<accession>P45480</accession>
<accession>Q43879</accession>
<gene>
    <name evidence="2" type="primary">gshB</name>
    <name type="synonym">gsh-II</name>
    <name type="ordered locus">all3859</name>
</gene>
<protein>
    <recommendedName>
        <fullName evidence="2">Glutathione synthetase</fullName>
        <ecNumber evidence="2">6.3.2.3</ecNumber>
    </recommendedName>
    <alternativeName>
        <fullName evidence="2">GSH synthetase</fullName>
        <shortName evidence="2">GSH-S</shortName>
        <shortName evidence="2">GSHase</shortName>
    </alternativeName>
    <alternativeName>
        <fullName evidence="2">Glutathione synthase</fullName>
    </alternativeName>
</protein>